<name>RHOC_CHICK</name>
<proteinExistence type="evidence at protein level"/>
<protein>
    <recommendedName>
        <fullName>Rho-related GTP-binding protein RhoC</fullName>
    </recommendedName>
</protein>
<gene>
    <name type="primary">RHOC</name>
    <name type="synonym">ARHC</name>
</gene>
<sequence>MAAIRKKLVIVGDGACGKTCLLIVFSKDQFPEVYVPTVFENYIADIEVDGKQVELALWDTAGQEDYDRLRPLSYPDTDVILMCFSIDSPDSLENIPEKWTPEVKHFCPNVPIILVGNKKDLRNDEHTRRELAKMKQEPVKPEEGRDMANRINAFGYLECSAKTKEGVREVFEMATRAGLQVRKNKKRRGCPLL</sequence>
<reference key="1">
    <citation type="journal article" date="1998" name="Development">
        <title>A role for rhoB in the delamination of neural crest cells from the dorsal neural tube.</title>
        <authorList>
            <person name="Liu J.-P."/>
            <person name="Jessell T.M."/>
        </authorList>
    </citation>
    <scope>NUCLEOTIDE SEQUENCE [MRNA]</scope>
    <scope>ADP-RIBOSYLATION</scope>
    <scope>DEVELOPMENTAL STAGE</scope>
    <source>
        <strain>Hamburger-Hamilton</strain>
        <tissue>Embryo</tissue>
    </source>
</reference>
<accession>Q9PSX7</accession>
<feature type="chain" id="PRO_0000276771" description="Rho-related GTP-binding protein RhoC">
    <location>
        <begin position="1"/>
        <end position="190"/>
    </location>
</feature>
<feature type="propeptide" id="PRO_0000276772" description="Removed in mature form" evidence="1">
    <location>
        <begin position="191"/>
        <end position="193"/>
    </location>
</feature>
<feature type="short sequence motif" description="Effector region" evidence="2">
    <location>
        <begin position="34"/>
        <end position="42"/>
    </location>
</feature>
<feature type="binding site" evidence="1">
    <location>
        <begin position="12"/>
        <end position="19"/>
    </location>
    <ligand>
        <name>GTP</name>
        <dbReference type="ChEBI" id="CHEBI:37565"/>
    </ligand>
</feature>
<feature type="binding site" evidence="1">
    <location>
        <begin position="59"/>
        <end position="63"/>
    </location>
    <ligand>
        <name>GTP</name>
        <dbReference type="ChEBI" id="CHEBI:37565"/>
    </ligand>
</feature>
<feature type="binding site" evidence="1">
    <location>
        <begin position="117"/>
        <end position="120"/>
    </location>
    <ligand>
        <name>GTP</name>
        <dbReference type="ChEBI" id="CHEBI:37565"/>
    </ligand>
</feature>
<feature type="modified residue" description="ADP-ribosylasparagine; by botulinum toxin" evidence="1">
    <location>
        <position position="41"/>
    </location>
</feature>
<feature type="modified residue" description="Cysteine methyl ester" evidence="1">
    <location>
        <position position="190"/>
    </location>
</feature>
<feature type="lipid moiety-binding region" description="S-geranylgeranyl cysteine" evidence="1">
    <location>
        <position position="190"/>
    </location>
</feature>
<feature type="helix" evidence="5">
    <location>
        <begin position="64"/>
        <end position="67"/>
    </location>
</feature>
<evidence type="ECO:0000250" key="1"/>
<evidence type="ECO:0000255" key="2"/>
<evidence type="ECO:0000269" key="3">
    <source>
    </source>
</evidence>
<evidence type="ECO:0000305" key="4"/>
<evidence type="ECO:0007829" key="5">
    <source>
        <dbReference type="PDB" id="4D0B"/>
    </source>
</evidence>
<comment type="function">
    <text evidence="1">Regulates a signal transduction pathway linking plasma membrane receptors to the assembly of focal adhesions and actin stress fibers. Serves as a microtubule-dependent signal that is required for the myosin contractile ring formation during cell cycle cytokinesis. Regulates apical junction formation in bronchial epithelial cells (By similarity).</text>
</comment>
<comment type="subcellular location">
    <subcellularLocation>
        <location evidence="4">Cell membrane</location>
        <topology evidence="4">Lipid-anchor</topology>
        <orientation evidence="4">Cytoplasmic side</orientation>
    </subcellularLocation>
    <subcellularLocation>
        <location evidence="1">Cleavage furrow</location>
    </subcellularLocation>
    <text evidence="1">Translocates to the equatorial region before furrow formation in a ECT2-dependent manner.</text>
</comment>
<comment type="developmental stage">
    <text evidence="3">Detected in embryonic notochord.</text>
</comment>
<comment type="similarity">
    <text evidence="4">Belongs to the small GTPase superfamily. Rho family.</text>
</comment>
<organism>
    <name type="scientific">Gallus gallus</name>
    <name type="common">Chicken</name>
    <dbReference type="NCBI Taxonomy" id="9031"/>
    <lineage>
        <taxon>Eukaryota</taxon>
        <taxon>Metazoa</taxon>
        <taxon>Chordata</taxon>
        <taxon>Craniata</taxon>
        <taxon>Vertebrata</taxon>
        <taxon>Euteleostomi</taxon>
        <taxon>Archelosauria</taxon>
        <taxon>Archosauria</taxon>
        <taxon>Dinosauria</taxon>
        <taxon>Saurischia</taxon>
        <taxon>Theropoda</taxon>
        <taxon>Coelurosauria</taxon>
        <taxon>Aves</taxon>
        <taxon>Neognathae</taxon>
        <taxon>Galloanserae</taxon>
        <taxon>Galliformes</taxon>
        <taxon>Phasianidae</taxon>
        <taxon>Phasianinae</taxon>
        <taxon>Gallus</taxon>
    </lineage>
</organism>
<keyword id="KW-0002">3D-structure</keyword>
<keyword id="KW-0013">ADP-ribosylation</keyword>
<keyword id="KW-1003">Cell membrane</keyword>
<keyword id="KW-0342">GTP-binding</keyword>
<keyword id="KW-0449">Lipoprotein</keyword>
<keyword id="KW-0472">Membrane</keyword>
<keyword id="KW-0488">Methylation</keyword>
<keyword id="KW-0547">Nucleotide-binding</keyword>
<keyword id="KW-0636">Prenylation</keyword>
<keyword id="KW-1185">Reference proteome</keyword>
<dbReference type="EMBL" id="AF098514">
    <property type="protein sequence ID" value="AAD12256.1"/>
    <property type="molecule type" value="mRNA"/>
</dbReference>
<dbReference type="RefSeq" id="NP_001025020.1">
    <property type="nucleotide sequence ID" value="NM_001029849.2"/>
</dbReference>
<dbReference type="RefSeq" id="XP_040508621.1">
    <property type="nucleotide sequence ID" value="XM_040652687.2"/>
</dbReference>
<dbReference type="RefSeq" id="XP_046788838.1">
    <property type="nucleotide sequence ID" value="XM_046932882.1"/>
</dbReference>
<dbReference type="PDB" id="4D0B">
    <property type="method" value="X-ray"/>
    <property type="resolution" value="2.80 A"/>
    <property type="chains" value="C=60-69"/>
</dbReference>
<dbReference type="PDBsum" id="4D0B"/>
<dbReference type="SMR" id="Q9PSX7"/>
<dbReference type="FunCoup" id="Q9PSX7">
    <property type="interactions" value="2468"/>
</dbReference>
<dbReference type="STRING" id="9031.ENSGALP00000002383"/>
<dbReference type="PaxDb" id="9031-ENSGALP00000002383"/>
<dbReference type="GeneID" id="395869"/>
<dbReference type="KEGG" id="gga:395869"/>
<dbReference type="CTD" id="389"/>
<dbReference type="VEuPathDB" id="HostDB:geneid_395869"/>
<dbReference type="eggNOG" id="KOG0393">
    <property type="taxonomic scope" value="Eukaryota"/>
</dbReference>
<dbReference type="HOGENOM" id="CLU_041217_21_2_1"/>
<dbReference type="InParanoid" id="Q9PSX7"/>
<dbReference type="OMA" id="EERPQMA"/>
<dbReference type="OrthoDB" id="8830751at2759"/>
<dbReference type="PhylomeDB" id="Q9PSX7"/>
<dbReference type="Reactome" id="R-GGA-416482">
    <property type="pathway name" value="G alpha (12/13) signalling events"/>
</dbReference>
<dbReference type="Reactome" id="R-GGA-416572">
    <property type="pathway name" value="Sema4D induced cell migration and growth-cone collapse"/>
</dbReference>
<dbReference type="Reactome" id="R-GGA-5625740">
    <property type="pathway name" value="RHO GTPases activate PKNs"/>
</dbReference>
<dbReference type="Reactome" id="R-GGA-5627117">
    <property type="pathway name" value="RHO GTPases Activate ROCKs"/>
</dbReference>
<dbReference type="Reactome" id="R-GGA-5663220">
    <property type="pathway name" value="RHO GTPases Activate Formins"/>
</dbReference>
<dbReference type="Reactome" id="R-GGA-9013106">
    <property type="pathway name" value="RHOC GTPase cycle"/>
</dbReference>
<dbReference type="PRO" id="PR:Q9PSX7"/>
<dbReference type="Proteomes" id="UP000000539">
    <property type="component" value="Chromosome 26"/>
</dbReference>
<dbReference type="Bgee" id="ENSGALG00000001569">
    <property type="expression patterns" value="Expressed in heart and 12 other cell types or tissues"/>
</dbReference>
<dbReference type="GO" id="GO:0032154">
    <property type="term" value="C:cleavage furrow"/>
    <property type="evidence" value="ECO:0000250"/>
    <property type="project" value="UniProtKB"/>
</dbReference>
<dbReference type="GO" id="GO:0005829">
    <property type="term" value="C:cytosol"/>
    <property type="evidence" value="ECO:0000318"/>
    <property type="project" value="GO_Central"/>
</dbReference>
<dbReference type="GO" id="GO:0005886">
    <property type="term" value="C:plasma membrane"/>
    <property type="evidence" value="ECO:0000318"/>
    <property type="project" value="GO_Central"/>
</dbReference>
<dbReference type="GO" id="GO:0005525">
    <property type="term" value="F:GTP binding"/>
    <property type="evidence" value="ECO:0000318"/>
    <property type="project" value="GO_Central"/>
</dbReference>
<dbReference type="GO" id="GO:0003924">
    <property type="term" value="F:GTPase activity"/>
    <property type="evidence" value="ECO:0000318"/>
    <property type="project" value="GO_Central"/>
</dbReference>
<dbReference type="GO" id="GO:0019901">
    <property type="term" value="F:protein kinase binding"/>
    <property type="evidence" value="ECO:0000318"/>
    <property type="project" value="GO_Central"/>
</dbReference>
<dbReference type="GO" id="GO:0007015">
    <property type="term" value="P:actin filament organization"/>
    <property type="evidence" value="ECO:0000318"/>
    <property type="project" value="GO_Central"/>
</dbReference>
<dbReference type="GO" id="GO:0043297">
    <property type="term" value="P:apical junction assembly"/>
    <property type="evidence" value="ECO:0000250"/>
    <property type="project" value="UniProtKB"/>
</dbReference>
<dbReference type="GO" id="GO:0016477">
    <property type="term" value="P:cell migration"/>
    <property type="evidence" value="ECO:0000318"/>
    <property type="project" value="GO_Central"/>
</dbReference>
<dbReference type="GO" id="GO:0000281">
    <property type="term" value="P:mitotic cytokinesis"/>
    <property type="evidence" value="ECO:0000250"/>
    <property type="project" value="UniProtKB"/>
</dbReference>
<dbReference type="GO" id="GO:0032956">
    <property type="term" value="P:regulation of actin cytoskeleton organization"/>
    <property type="evidence" value="ECO:0000318"/>
    <property type="project" value="GO_Central"/>
</dbReference>
<dbReference type="GO" id="GO:0007165">
    <property type="term" value="P:signal transduction"/>
    <property type="evidence" value="ECO:0000318"/>
    <property type="project" value="GO_Central"/>
</dbReference>
<dbReference type="GO" id="GO:1902766">
    <property type="term" value="P:skeletal muscle satellite cell migration"/>
    <property type="evidence" value="ECO:0000250"/>
    <property type="project" value="AgBase"/>
</dbReference>
<dbReference type="GO" id="GO:0007264">
    <property type="term" value="P:small GTPase-mediated signal transduction"/>
    <property type="evidence" value="ECO:0007669"/>
    <property type="project" value="InterPro"/>
</dbReference>
<dbReference type="GO" id="GO:0044319">
    <property type="term" value="P:wound healing, spreading of cells"/>
    <property type="evidence" value="ECO:0000250"/>
    <property type="project" value="AgBase"/>
</dbReference>
<dbReference type="CDD" id="cd01870">
    <property type="entry name" value="RhoA_like"/>
    <property type="match status" value="1"/>
</dbReference>
<dbReference type="FunFam" id="3.40.50.300:FF:000095">
    <property type="entry name" value="Rho-related GTP-binding protein RhoC"/>
    <property type="match status" value="1"/>
</dbReference>
<dbReference type="Gene3D" id="3.40.50.300">
    <property type="entry name" value="P-loop containing nucleotide triphosphate hydrolases"/>
    <property type="match status" value="1"/>
</dbReference>
<dbReference type="InterPro" id="IPR027417">
    <property type="entry name" value="P-loop_NTPase"/>
</dbReference>
<dbReference type="InterPro" id="IPR005225">
    <property type="entry name" value="Small_GTP-bd"/>
</dbReference>
<dbReference type="InterPro" id="IPR001806">
    <property type="entry name" value="Small_GTPase"/>
</dbReference>
<dbReference type="InterPro" id="IPR003578">
    <property type="entry name" value="Small_GTPase_Rho"/>
</dbReference>
<dbReference type="NCBIfam" id="TIGR00231">
    <property type="entry name" value="small_GTP"/>
    <property type="match status" value="1"/>
</dbReference>
<dbReference type="PANTHER" id="PTHR24072">
    <property type="entry name" value="RHO FAMILY GTPASE"/>
    <property type="match status" value="1"/>
</dbReference>
<dbReference type="Pfam" id="PF00071">
    <property type="entry name" value="Ras"/>
    <property type="match status" value="1"/>
</dbReference>
<dbReference type="PRINTS" id="PR00449">
    <property type="entry name" value="RASTRNSFRMNG"/>
</dbReference>
<dbReference type="SMART" id="SM00175">
    <property type="entry name" value="RAB"/>
    <property type="match status" value="1"/>
</dbReference>
<dbReference type="SMART" id="SM00173">
    <property type="entry name" value="RAS"/>
    <property type="match status" value="1"/>
</dbReference>
<dbReference type="SMART" id="SM00174">
    <property type="entry name" value="RHO"/>
    <property type="match status" value="1"/>
</dbReference>
<dbReference type="SUPFAM" id="SSF52540">
    <property type="entry name" value="P-loop containing nucleoside triphosphate hydrolases"/>
    <property type="match status" value="1"/>
</dbReference>
<dbReference type="PROSITE" id="PS51420">
    <property type="entry name" value="RHO"/>
    <property type="match status" value="1"/>
</dbReference>